<dbReference type="EC" id="1.17.1.8" evidence="1"/>
<dbReference type="EMBL" id="CP000774">
    <property type="protein sequence ID" value="ABS65169.1"/>
    <property type="molecule type" value="Genomic_DNA"/>
</dbReference>
<dbReference type="RefSeq" id="WP_012112429.1">
    <property type="nucleotide sequence ID" value="NC_009719.1"/>
</dbReference>
<dbReference type="SMR" id="A7HZ36"/>
<dbReference type="STRING" id="402881.Plav_3571"/>
<dbReference type="KEGG" id="pla:Plav_3571"/>
<dbReference type="eggNOG" id="COG0289">
    <property type="taxonomic scope" value="Bacteria"/>
</dbReference>
<dbReference type="HOGENOM" id="CLU_047479_2_1_5"/>
<dbReference type="OrthoDB" id="9790352at2"/>
<dbReference type="UniPathway" id="UPA00034">
    <property type="reaction ID" value="UER00018"/>
</dbReference>
<dbReference type="Proteomes" id="UP000006377">
    <property type="component" value="Chromosome"/>
</dbReference>
<dbReference type="GO" id="GO:0005829">
    <property type="term" value="C:cytosol"/>
    <property type="evidence" value="ECO:0007669"/>
    <property type="project" value="TreeGrafter"/>
</dbReference>
<dbReference type="GO" id="GO:0008839">
    <property type="term" value="F:4-hydroxy-tetrahydrodipicolinate reductase"/>
    <property type="evidence" value="ECO:0007669"/>
    <property type="project" value="UniProtKB-EC"/>
</dbReference>
<dbReference type="GO" id="GO:0051287">
    <property type="term" value="F:NAD binding"/>
    <property type="evidence" value="ECO:0007669"/>
    <property type="project" value="UniProtKB-UniRule"/>
</dbReference>
<dbReference type="GO" id="GO:0050661">
    <property type="term" value="F:NADP binding"/>
    <property type="evidence" value="ECO:0007669"/>
    <property type="project" value="UniProtKB-UniRule"/>
</dbReference>
<dbReference type="GO" id="GO:0016726">
    <property type="term" value="F:oxidoreductase activity, acting on CH or CH2 groups, NAD or NADP as acceptor"/>
    <property type="evidence" value="ECO:0007669"/>
    <property type="project" value="UniProtKB-UniRule"/>
</dbReference>
<dbReference type="GO" id="GO:0019877">
    <property type="term" value="P:diaminopimelate biosynthetic process"/>
    <property type="evidence" value="ECO:0007669"/>
    <property type="project" value="UniProtKB-UniRule"/>
</dbReference>
<dbReference type="GO" id="GO:0009089">
    <property type="term" value="P:lysine biosynthetic process via diaminopimelate"/>
    <property type="evidence" value="ECO:0007669"/>
    <property type="project" value="UniProtKB-UniRule"/>
</dbReference>
<dbReference type="CDD" id="cd02274">
    <property type="entry name" value="DHDPR_N"/>
    <property type="match status" value="1"/>
</dbReference>
<dbReference type="FunFam" id="3.30.360.10:FF:000004">
    <property type="entry name" value="4-hydroxy-tetrahydrodipicolinate reductase"/>
    <property type="match status" value="1"/>
</dbReference>
<dbReference type="Gene3D" id="3.30.360.10">
    <property type="entry name" value="Dihydrodipicolinate Reductase, domain 2"/>
    <property type="match status" value="1"/>
</dbReference>
<dbReference type="Gene3D" id="3.40.50.720">
    <property type="entry name" value="NAD(P)-binding Rossmann-like Domain"/>
    <property type="match status" value="1"/>
</dbReference>
<dbReference type="HAMAP" id="MF_00102">
    <property type="entry name" value="DapB"/>
    <property type="match status" value="1"/>
</dbReference>
<dbReference type="InterPro" id="IPR022663">
    <property type="entry name" value="DapB_C"/>
</dbReference>
<dbReference type="InterPro" id="IPR000846">
    <property type="entry name" value="DapB_N"/>
</dbReference>
<dbReference type="InterPro" id="IPR022664">
    <property type="entry name" value="DapB_N_CS"/>
</dbReference>
<dbReference type="InterPro" id="IPR023940">
    <property type="entry name" value="DHDPR_bac"/>
</dbReference>
<dbReference type="InterPro" id="IPR036291">
    <property type="entry name" value="NAD(P)-bd_dom_sf"/>
</dbReference>
<dbReference type="NCBIfam" id="TIGR00036">
    <property type="entry name" value="dapB"/>
    <property type="match status" value="1"/>
</dbReference>
<dbReference type="PANTHER" id="PTHR20836:SF0">
    <property type="entry name" value="4-HYDROXY-TETRAHYDRODIPICOLINATE REDUCTASE 1, CHLOROPLASTIC-RELATED"/>
    <property type="match status" value="1"/>
</dbReference>
<dbReference type="PANTHER" id="PTHR20836">
    <property type="entry name" value="DIHYDRODIPICOLINATE REDUCTASE"/>
    <property type="match status" value="1"/>
</dbReference>
<dbReference type="Pfam" id="PF05173">
    <property type="entry name" value="DapB_C"/>
    <property type="match status" value="1"/>
</dbReference>
<dbReference type="Pfam" id="PF01113">
    <property type="entry name" value="DapB_N"/>
    <property type="match status" value="1"/>
</dbReference>
<dbReference type="PIRSF" id="PIRSF000161">
    <property type="entry name" value="DHPR"/>
    <property type="match status" value="1"/>
</dbReference>
<dbReference type="SUPFAM" id="SSF55347">
    <property type="entry name" value="Glyceraldehyde-3-phosphate dehydrogenase-like, C-terminal domain"/>
    <property type="match status" value="1"/>
</dbReference>
<dbReference type="SUPFAM" id="SSF51735">
    <property type="entry name" value="NAD(P)-binding Rossmann-fold domains"/>
    <property type="match status" value="1"/>
</dbReference>
<dbReference type="PROSITE" id="PS01298">
    <property type="entry name" value="DAPB"/>
    <property type="match status" value="1"/>
</dbReference>
<name>DAPB_PARL1</name>
<feature type="chain" id="PRO_1000071304" description="4-hydroxy-tetrahydrodipicolinate reductase">
    <location>
        <begin position="1"/>
        <end position="271"/>
    </location>
</feature>
<feature type="active site" description="Proton donor/acceptor" evidence="1">
    <location>
        <position position="159"/>
    </location>
</feature>
<feature type="active site" description="Proton donor" evidence="1">
    <location>
        <position position="163"/>
    </location>
</feature>
<feature type="binding site" evidence="1">
    <location>
        <begin position="11"/>
        <end position="16"/>
    </location>
    <ligand>
        <name>NAD(+)</name>
        <dbReference type="ChEBI" id="CHEBI:57540"/>
    </ligand>
</feature>
<feature type="binding site" evidence="1">
    <location>
        <position position="37"/>
    </location>
    <ligand>
        <name>NAD(+)</name>
        <dbReference type="ChEBI" id="CHEBI:57540"/>
    </ligand>
</feature>
<feature type="binding site" evidence="1">
    <location>
        <begin position="102"/>
        <end position="104"/>
    </location>
    <ligand>
        <name>NAD(+)</name>
        <dbReference type="ChEBI" id="CHEBI:57540"/>
    </ligand>
</feature>
<feature type="binding site" evidence="1">
    <location>
        <begin position="126"/>
        <end position="129"/>
    </location>
    <ligand>
        <name>NAD(+)</name>
        <dbReference type="ChEBI" id="CHEBI:57540"/>
    </ligand>
</feature>
<feature type="binding site" evidence="1">
    <location>
        <position position="160"/>
    </location>
    <ligand>
        <name>(S)-2,3,4,5-tetrahydrodipicolinate</name>
        <dbReference type="ChEBI" id="CHEBI:16845"/>
    </ligand>
</feature>
<feature type="binding site" evidence="1">
    <location>
        <begin position="169"/>
        <end position="170"/>
    </location>
    <ligand>
        <name>(S)-2,3,4,5-tetrahydrodipicolinate</name>
        <dbReference type="ChEBI" id="CHEBI:16845"/>
    </ligand>
</feature>
<gene>
    <name evidence="1" type="primary">dapB</name>
    <name type="ordered locus">Plav_3571</name>
</gene>
<evidence type="ECO:0000255" key="1">
    <source>
        <dbReference type="HAMAP-Rule" id="MF_00102"/>
    </source>
</evidence>
<evidence type="ECO:0000305" key="2"/>
<protein>
    <recommendedName>
        <fullName evidence="1">4-hydroxy-tetrahydrodipicolinate reductase</fullName>
        <shortName evidence="1">HTPA reductase</shortName>
        <ecNumber evidence="1">1.17.1.8</ecNumber>
    </recommendedName>
</protein>
<comment type="function">
    <text evidence="1">Catalyzes the conversion of 4-hydroxy-tetrahydrodipicolinate (HTPA) to tetrahydrodipicolinate.</text>
</comment>
<comment type="catalytic activity">
    <reaction evidence="1">
        <text>(S)-2,3,4,5-tetrahydrodipicolinate + NAD(+) + H2O = (2S,4S)-4-hydroxy-2,3,4,5-tetrahydrodipicolinate + NADH + H(+)</text>
        <dbReference type="Rhea" id="RHEA:35323"/>
        <dbReference type="ChEBI" id="CHEBI:15377"/>
        <dbReference type="ChEBI" id="CHEBI:15378"/>
        <dbReference type="ChEBI" id="CHEBI:16845"/>
        <dbReference type="ChEBI" id="CHEBI:57540"/>
        <dbReference type="ChEBI" id="CHEBI:57945"/>
        <dbReference type="ChEBI" id="CHEBI:67139"/>
        <dbReference type="EC" id="1.17.1.8"/>
    </reaction>
</comment>
<comment type="catalytic activity">
    <reaction evidence="1">
        <text>(S)-2,3,4,5-tetrahydrodipicolinate + NADP(+) + H2O = (2S,4S)-4-hydroxy-2,3,4,5-tetrahydrodipicolinate + NADPH + H(+)</text>
        <dbReference type="Rhea" id="RHEA:35331"/>
        <dbReference type="ChEBI" id="CHEBI:15377"/>
        <dbReference type="ChEBI" id="CHEBI:15378"/>
        <dbReference type="ChEBI" id="CHEBI:16845"/>
        <dbReference type="ChEBI" id="CHEBI:57783"/>
        <dbReference type="ChEBI" id="CHEBI:58349"/>
        <dbReference type="ChEBI" id="CHEBI:67139"/>
        <dbReference type="EC" id="1.17.1.8"/>
    </reaction>
</comment>
<comment type="pathway">
    <text evidence="1">Amino-acid biosynthesis; L-lysine biosynthesis via DAP pathway; (S)-tetrahydrodipicolinate from L-aspartate: step 4/4.</text>
</comment>
<comment type="subcellular location">
    <subcellularLocation>
        <location evidence="1">Cytoplasm</location>
    </subcellularLocation>
</comment>
<comment type="similarity">
    <text evidence="1">Belongs to the DapB family.</text>
</comment>
<comment type="caution">
    <text evidence="2">Was originally thought to be a dihydrodipicolinate reductase (DHDPR), catalyzing the conversion of dihydrodipicolinate to tetrahydrodipicolinate. However, it was shown in E.coli that the substrate of the enzymatic reaction is not dihydrodipicolinate (DHDP) but in fact (2S,4S)-4-hydroxy-2,3,4,5-tetrahydrodipicolinic acid (HTPA), the product released by the DapA-catalyzed reaction.</text>
</comment>
<sequence length="271" mass="27862">MTADIKIVVTGAAGRMGRTLIRLIHETEGLSLAGGLEGEGSPYLGTDLGTLAGLAQPTGLAATADALTLIKDADALIDFSVPAATLEFAALAAQARIVHVIGTTGFEVVDEEKIKAAARHATIVKAGNMSLGVNLLAALVRQAAKALDGQWDIEIVEMHHRHKVDAPSGTALLLGEAAAEGRGVALEDVSARGRDGITGARKAGDIGFASLRGGSVVGDHTVVFATEHERITLGHIAEDRSIFARGALKAARWGQGKGPGLFSMADVLGIE</sequence>
<keyword id="KW-0028">Amino-acid biosynthesis</keyword>
<keyword id="KW-0963">Cytoplasm</keyword>
<keyword id="KW-0220">Diaminopimelate biosynthesis</keyword>
<keyword id="KW-0457">Lysine biosynthesis</keyword>
<keyword id="KW-0520">NAD</keyword>
<keyword id="KW-0521">NADP</keyword>
<keyword id="KW-0560">Oxidoreductase</keyword>
<keyword id="KW-1185">Reference proteome</keyword>
<organism>
    <name type="scientific">Parvibaculum lavamentivorans (strain DS-1 / DSM 13023 / NCIMB 13966)</name>
    <dbReference type="NCBI Taxonomy" id="402881"/>
    <lineage>
        <taxon>Bacteria</taxon>
        <taxon>Pseudomonadati</taxon>
        <taxon>Pseudomonadota</taxon>
        <taxon>Alphaproteobacteria</taxon>
        <taxon>Hyphomicrobiales</taxon>
        <taxon>Parvibaculaceae</taxon>
        <taxon>Parvibaculum</taxon>
    </lineage>
</organism>
<reference key="1">
    <citation type="journal article" date="2011" name="Stand. Genomic Sci.">
        <title>Complete genome sequence of Parvibaculum lavamentivorans type strain (DS-1(T)).</title>
        <authorList>
            <person name="Schleheck D."/>
            <person name="Weiss M."/>
            <person name="Pitluck S."/>
            <person name="Bruce D."/>
            <person name="Land M.L."/>
            <person name="Han S."/>
            <person name="Saunders E."/>
            <person name="Tapia R."/>
            <person name="Detter C."/>
            <person name="Brettin T."/>
            <person name="Han J."/>
            <person name="Woyke T."/>
            <person name="Goodwin L."/>
            <person name="Pennacchio L."/>
            <person name="Nolan M."/>
            <person name="Cook A.M."/>
            <person name="Kjelleberg S."/>
            <person name="Thomas T."/>
        </authorList>
    </citation>
    <scope>NUCLEOTIDE SEQUENCE [LARGE SCALE GENOMIC DNA]</scope>
    <source>
        <strain>DS-1 / DSM 13023 / NCIMB 13966</strain>
    </source>
</reference>
<accession>A7HZ36</accession>
<proteinExistence type="inferred from homology"/>